<dbReference type="EMBL" id="AF089743">
    <property type="protein sequence ID" value="AAD46396.1"/>
    <property type="molecule type" value="Genomic_DNA"/>
</dbReference>
<dbReference type="SMR" id="Q9PWD5"/>
<dbReference type="GO" id="GO:0005634">
    <property type="term" value="C:nucleus"/>
    <property type="evidence" value="ECO:0007669"/>
    <property type="project" value="UniProtKB-SubCell"/>
</dbReference>
<dbReference type="GO" id="GO:0000981">
    <property type="term" value="F:DNA-binding transcription factor activity, RNA polymerase II-specific"/>
    <property type="evidence" value="ECO:0007669"/>
    <property type="project" value="InterPro"/>
</dbReference>
<dbReference type="GO" id="GO:0000978">
    <property type="term" value="F:RNA polymerase II cis-regulatory region sequence-specific DNA binding"/>
    <property type="evidence" value="ECO:0007669"/>
    <property type="project" value="TreeGrafter"/>
</dbReference>
<dbReference type="GO" id="GO:0009952">
    <property type="term" value="P:anterior/posterior pattern specification"/>
    <property type="evidence" value="ECO:0007669"/>
    <property type="project" value="TreeGrafter"/>
</dbReference>
<dbReference type="GO" id="GO:0006351">
    <property type="term" value="P:DNA-templated transcription"/>
    <property type="evidence" value="ECO:0007669"/>
    <property type="project" value="InterPro"/>
</dbReference>
<dbReference type="GO" id="GO:0048704">
    <property type="term" value="P:embryonic skeletal system morphogenesis"/>
    <property type="evidence" value="ECO:0007669"/>
    <property type="project" value="TreeGrafter"/>
</dbReference>
<dbReference type="GO" id="GO:0009954">
    <property type="term" value="P:proximal/distal pattern formation"/>
    <property type="evidence" value="ECO:0007669"/>
    <property type="project" value="TreeGrafter"/>
</dbReference>
<dbReference type="CDD" id="cd00086">
    <property type="entry name" value="homeodomain"/>
    <property type="match status" value="1"/>
</dbReference>
<dbReference type="FunFam" id="1.10.10.60:FF:000166">
    <property type="entry name" value="homeobox protein Hox-C11"/>
    <property type="match status" value="1"/>
</dbReference>
<dbReference type="Gene3D" id="1.10.10.60">
    <property type="entry name" value="Homeodomain-like"/>
    <property type="match status" value="1"/>
</dbReference>
<dbReference type="InterPro" id="IPR050803">
    <property type="entry name" value="Abd-B_homeobox_TF"/>
</dbReference>
<dbReference type="InterPro" id="IPR001356">
    <property type="entry name" value="HD"/>
</dbReference>
<dbReference type="InterPro" id="IPR020479">
    <property type="entry name" value="HD_metazoa"/>
</dbReference>
<dbReference type="InterPro" id="IPR017970">
    <property type="entry name" value="Homeobox_CS"/>
</dbReference>
<dbReference type="InterPro" id="IPR009057">
    <property type="entry name" value="Homeodomain-like_sf"/>
</dbReference>
<dbReference type="InterPro" id="IPR006711">
    <property type="entry name" value="Hox9_activation_N"/>
</dbReference>
<dbReference type="InterPro" id="IPR017112">
    <property type="entry name" value="HXA9/HXB9/HXC9"/>
</dbReference>
<dbReference type="PANTHER" id="PTHR45970">
    <property type="entry name" value="AGAP004664-PA"/>
    <property type="match status" value="1"/>
</dbReference>
<dbReference type="PANTHER" id="PTHR45970:SF3">
    <property type="entry name" value="HOMEOBOX PROTEIN HOX-A9"/>
    <property type="match status" value="1"/>
</dbReference>
<dbReference type="Pfam" id="PF00046">
    <property type="entry name" value="Homeodomain"/>
    <property type="match status" value="1"/>
</dbReference>
<dbReference type="Pfam" id="PF04617">
    <property type="entry name" value="Hox9_act"/>
    <property type="match status" value="1"/>
</dbReference>
<dbReference type="PIRSF" id="PIRSF037109">
    <property type="entry name" value="Homeobox_Hox9"/>
    <property type="match status" value="1"/>
</dbReference>
<dbReference type="PRINTS" id="PR00024">
    <property type="entry name" value="HOMEOBOX"/>
</dbReference>
<dbReference type="SMART" id="SM00389">
    <property type="entry name" value="HOX"/>
    <property type="match status" value="1"/>
</dbReference>
<dbReference type="SUPFAM" id="SSF46689">
    <property type="entry name" value="Homeodomain-like"/>
    <property type="match status" value="1"/>
</dbReference>
<dbReference type="PROSITE" id="PS00027">
    <property type="entry name" value="HOMEOBOX_1"/>
    <property type="match status" value="1"/>
</dbReference>
<dbReference type="PROSITE" id="PS50071">
    <property type="entry name" value="HOMEOBOX_2"/>
    <property type="match status" value="1"/>
</dbReference>
<organism>
    <name type="scientific">Morone saxatilis</name>
    <name type="common">Striped bass</name>
    <name type="synonym">Perca saxatilis</name>
    <dbReference type="NCBI Taxonomy" id="34816"/>
    <lineage>
        <taxon>Eukaryota</taxon>
        <taxon>Metazoa</taxon>
        <taxon>Chordata</taxon>
        <taxon>Craniata</taxon>
        <taxon>Vertebrata</taxon>
        <taxon>Euteleostomi</taxon>
        <taxon>Actinopterygii</taxon>
        <taxon>Neopterygii</taxon>
        <taxon>Teleostei</taxon>
        <taxon>Neoteleostei</taxon>
        <taxon>Acanthomorphata</taxon>
        <taxon>Eupercaria</taxon>
        <taxon>Moronidae</taxon>
        <taxon>Morone</taxon>
    </lineage>
</organism>
<sequence>MSTSGTLTSYYVDSLILPESEELSVPRYPSGPGLQHARQSASISDHSELGTCTFPSKPPVFGPSWSHVPAQFPGTVSSVYHHHYGHPQGPVGADTDGRYQSWLLEPMSGSLPMAGLPTTHHYGIKPEGLGTRADGALPGSHTALLLSDYANGTVATASPVEKDTLSGQAGDVSGEAEEKPGLDPSKSLQNNPVSNWLHASATRKKRCPYTKHQILELEKEFLFNTYLTRDRRYEVARLLNLTERQVKIWFQNRRMKMKKFNKDGAPKDE</sequence>
<protein>
    <recommendedName>
        <fullName>Homeobox protein Hox-A9</fullName>
    </recommendedName>
</protein>
<name>HXA9_MORSA</name>
<reference key="1">
    <citation type="journal article" date="1999" name="J. Exp. Zool.">
        <title>Genomic organization of the Hoxa4-Hoxa10 region from Morone saxatilis: implications for Hox gene evolution among vertebrates.</title>
        <authorList>
            <person name="Snell E.A."/>
            <person name="Scemama J.L."/>
            <person name="Stellwag E.J."/>
        </authorList>
    </citation>
    <scope>NUCLEOTIDE SEQUENCE [GENOMIC DNA]</scope>
</reference>
<proteinExistence type="inferred from homology"/>
<comment type="function">
    <text evidence="1">Sequence-specific transcription factor which is part of a developmental regulatory system that provides cells with specific positional identities on the anterior-posterior axis.</text>
</comment>
<comment type="subcellular location">
    <subcellularLocation>
        <location evidence="2">Nucleus</location>
    </subcellularLocation>
</comment>
<comment type="similarity">
    <text evidence="4">Belongs to the Abd-B homeobox family.</text>
</comment>
<gene>
    <name type="primary">hoxa9</name>
</gene>
<accession>Q9PWD5</accession>
<evidence type="ECO:0000250" key="1"/>
<evidence type="ECO:0000255" key="2">
    <source>
        <dbReference type="PROSITE-ProRule" id="PRU00108"/>
    </source>
</evidence>
<evidence type="ECO:0000256" key="3">
    <source>
        <dbReference type="SAM" id="MobiDB-lite"/>
    </source>
</evidence>
<evidence type="ECO:0000305" key="4"/>
<keyword id="KW-0217">Developmental protein</keyword>
<keyword id="KW-0238">DNA-binding</keyword>
<keyword id="KW-0371">Homeobox</keyword>
<keyword id="KW-0539">Nucleus</keyword>
<keyword id="KW-0804">Transcription</keyword>
<keyword id="KW-0805">Transcription regulation</keyword>
<feature type="chain" id="PRO_0000200088" description="Homeobox protein Hox-A9">
    <location>
        <begin position="1"/>
        <end position="269"/>
    </location>
</feature>
<feature type="DNA-binding region" description="Homeobox" evidence="2">
    <location>
        <begin position="202"/>
        <end position="261"/>
    </location>
</feature>
<feature type="region of interest" description="Disordered" evidence="3">
    <location>
        <begin position="159"/>
        <end position="192"/>
    </location>
</feature>